<name>DEFI_APICA</name>
<protein>
    <recommendedName>
        <fullName>Defensin-1</fullName>
    </recommendedName>
</protein>
<keyword id="KW-0027">Amidation</keyword>
<keyword id="KW-0044">Antibiotic</keyword>
<keyword id="KW-0929">Antimicrobial</keyword>
<keyword id="KW-0165">Cleavage on pair of basic residues</keyword>
<keyword id="KW-0211">Defensin</keyword>
<keyword id="KW-1015">Disulfide bond</keyword>
<keyword id="KW-0391">Immunity</keyword>
<keyword id="KW-0399">Innate immunity</keyword>
<keyword id="KW-0964">Secreted</keyword>
<keyword id="KW-0732">Signal</keyword>
<proteinExistence type="evidence at protein level"/>
<organism>
    <name type="scientific">Apis mellifera carnica</name>
    <name type="common">Carniolan honeybee</name>
    <dbReference type="NCBI Taxonomy" id="88217"/>
    <lineage>
        <taxon>Eukaryota</taxon>
        <taxon>Metazoa</taxon>
        <taxon>Ecdysozoa</taxon>
        <taxon>Arthropoda</taxon>
        <taxon>Hexapoda</taxon>
        <taxon>Insecta</taxon>
        <taxon>Pterygota</taxon>
        <taxon>Neoptera</taxon>
        <taxon>Endopterygota</taxon>
        <taxon>Hymenoptera</taxon>
        <taxon>Apocrita</taxon>
        <taxon>Aculeata</taxon>
        <taxon>Apoidea</taxon>
        <taxon>Anthophila</taxon>
        <taxon>Apidae</taxon>
        <taxon>Apis</taxon>
    </lineage>
</organism>
<reference key="1">
    <citation type="journal article" date="2005" name="Insect Biochem. Mol. Biol.">
        <title>Two structurally different defensin genes, one of them encoding a novel defensin isoform, are expressed in honeybee Apis mellifera.</title>
        <authorList>
            <person name="Klaudiny J."/>
            <person name="Albert S."/>
            <person name="Bachanova K."/>
            <person name="Kopernicky J."/>
            <person name="Simuth J."/>
        </authorList>
    </citation>
    <scope>NUCLEOTIDE SEQUENCE [MRNA]</scope>
    <scope>MASS SPECTROMETRY</scope>
    <source>
        <tissue>Head</tissue>
        <tissue>Royal jelly</tissue>
    </source>
</reference>
<dbReference type="EMBL" id="AY333923">
    <property type="protein sequence ID" value="AAR01214.1"/>
    <property type="molecule type" value="mRNA"/>
</dbReference>
<dbReference type="GO" id="GO:0005615">
    <property type="term" value="C:extracellular space"/>
    <property type="evidence" value="ECO:0007669"/>
    <property type="project" value="TreeGrafter"/>
</dbReference>
<dbReference type="GO" id="GO:0042742">
    <property type="term" value="P:defense response to bacterium"/>
    <property type="evidence" value="ECO:0007669"/>
    <property type="project" value="UniProtKB-KW"/>
</dbReference>
<dbReference type="GO" id="GO:0006959">
    <property type="term" value="P:humoral immune response"/>
    <property type="evidence" value="ECO:0007669"/>
    <property type="project" value="TreeGrafter"/>
</dbReference>
<dbReference type="GO" id="GO:0045087">
    <property type="term" value="P:innate immune response"/>
    <property type="evidence" value="ECO:0007669"/>
    <property type="project" value="UniProtKB-KW"/>
</dbReference>
<dbReference type="CDD" id="cd21806">
    <property type="entry name" value="DEFL_defensin-like"/>
    <property type="match status" value="1"/>
</dbReference>
<dbReference type="Gene3D" id="3.30.30.10">
    <property type="entry name" value="Knottin, scorpion toxin-like"/>
    <property type="match status" value="1"/>
</dbReference>
<dbReference type="InterPro" id="IPR017982">
    <property type="entry name" value="Defensin_insect"/>
</dbReference>
<dbReference type="InterPro" id="IPR001542">
    <property type="entry name" value="Defensin_invertebrate/fungal"/>
</dbReference>
<dbReference type="InterPro" id="IPR003614">
    <property type="entry name" value="Scorpion_toxin-like"/>
</dbReference>
<dbReference type="InterPro" id="IPR036574">
    <property type="entry name" value="Scorpion_toxin-like_sf"/>
</dbReference>
<dbReference type="PANTHER" id="PTHR13645">
    <property type="entry name" value="DEFENSIN"/>
    <property type="match status" value="1"/>
</dbReference>
<dbReference type="PANTHER" id="PTHR13645:SF0">
    <property type="entry name" value="DEFENSIN"/>
    <property type="match status" value="1"/>
</dbReference>
<dbReference type="Pfam" id="PF01097">
    <property type="entry name" value="Defensin_2"/>
    <property type="match status" value="1"/>
</dbReference>
<dbReference type="PRINTS" id="PR00271">
    <property type="entry name" value="DEFENSIN"/>
</dbReference>
<dbReference type="SMART" id="SM00505">
    <property type="entry name" value="Knot1"/>
    <property type="match status" value="1"/>
</dbReference>
<dbReference type="SUPFAM" id="SSF57095">
    <property type="entry name" value="Scorpion toxin-like"/>
    <property type="match status" value="1"/>
</dbReference>
<dbReference type="PROSITE" id="PS51378">
    <property type="entry name" value="INVERT_DEFENSINS"/>
    <property type="match status" value="1"/>
</dbReference>
<accession>Q5J8R1</accession>
<feature type="signal peptide" evidence="2">
    <location>
        <begin position="1"/>
        <end position="19"/>
    </location>
</feature>
<feature type="propeptide" id="PRO_0000394507" evidence="1">
    <location>
        <begin position="20"/>
        <end position="43"/>
    </location>
</feature>
<feature type="chain" id="PRO_5000091845" description="Defensin-1">
    <location>
        <begin position="44"/>
        <end position="94"/>
    </location>
</feature>
<feature type="modified residue" description="Phenylalanine amide" evidence="1">
    <location>
        <position position="94"/>
    </location>
</feature>
<feature type="disulfide bond" evidence="3">
    <location>
        <begin position="46"/>
        <end position="74"/>
    </location>
</feature>
<feature type="disulfide bond" evidence="3">
    <location>
        <begin position="60"/>
        <end position="79"/>
    </location>
</feature>
<feature type="disulfide bond" evidence="3">
    <location>
        <begin position="64"/>
        <end position="81"/>
    </location>
</feature>
<comment type="function">
    <text evidence="1">Found in royal jelly and in hemolymph, potent antibacterial protein against Gram-positive bacteria at low concentration.</text>
</comment>
<comment type="subcellular location">
    <subcellularLocation>
        <location>Secreted</location>
    </subcellularLocation>
</comment>
<comment type="mass spectrometry" mass="5515.5" error="3.0" method="MALDI" evidence="4"/>
<comment type="similarity">
    <text evidence="3">Belongs to the invertebrate defensin family. Type 1 subfamily.</text>
</comment>
<evidence type="ECO:0000250" key="1"/>
<evidence type="ECO:0000255" key="2"/>
<evidence type="ECO:0000255" key="3">
    <source>
        <dbReference type="PROSITE-ProRule" id="PRU00710"/>
    </source>
</evidence>
<evidence type="ECO:0000269" key="4">
    <source>
    </source>
</evidence>
<sequence length="95" mass="10717">MKIYFIVGLLFMAMVAIMAAPVEDEFEPLEHFENEERADRHRRVTCDLLSFKGQVNDSACAANCLSLGKAGGHCEKGVCICRKTSFKDLWDKRFG</sequence>